<feature type="chain" id="PRO_1000121101" description="DNA replication and repair protein RecF">
    <location>
        <begin position="1"/>
        <end position="357"/>
    </location>
</feature>
<feature type="binding site" evidence="1">
    <location>
        <begin position="31"/>
        <end position="38"/>
    </location>
    <ligand>
        <name>ATP</name>
        <dbReference type="ChEBI" id="CHEBI:30616"/>
    </ligand>
</feature>
<protein>
    <recommendedName>
        <fullName evidence="1">DNA replication and repair protein RecF</fullName>
    </recommendedName>
</protein>
<dbReference type="EMBL" id="CP001020">
    <property type="protein sequence ID" value="ACJ19333.1"/>
    <property type="molecule type" value="Genomic_DNA"/>
</dbReference>
<dbReference type="RefSeq" id="WP_005769935.1">
    <property type="nucleotide sequence ID" value="NC_011528.1"/>
</dbReference>
<dbReference type="SMR" id="B6J8S5"/>
<dbReference type="KEGG" id="cbc:CbuK_0003"/>
<dbReference type="HOGENOM" id="CLU_040267_0_0_6"/>
<dbReference type="GO" id="GO:0005737">
    <property type="term" value="C:cytoplasm"/>
    <property type="evidence" value="ECO:0007669"/>
    <property type="project" value="UniProtKB-SubCell"/>
</dbReference>
<dbReference type="GO" id="GO:0005524">
    <property type="term" value="F:ATP binding"/>
    <property type="evidence" value="ECO:0007669"/>
    <property type="project" value="UniProtKB-UniRule"/>
</dbReference>
<dbReference type="GO" id="GO:0003697">
    <property type="term" value="F:single-stranded DNA binding"/>
    <property type="evidence" value="ECO:0007669"/>
    <property type="project" value="UniProtKB-UniRule"/>
</dbReference>
<dbReference type="GO" id="GO:0006260">
    <property type="term" value="P:DNA replication"/>
    <property type="evidence" value="ECO:0007669"/>
    <property type="project" value="UniProtKB-UniRule"/>
</dbReference>
<dbReference type="GO" id="GO:0000731">
    <property type="term" value="P:DNA synthesis involved in DNA repair"/>
    <property type="evidence" value="ECO:0007669"/>
    <property type="project" value="TreeGrafter"/>
</dbReference>
<dbReference type="GO" id="GO:0006302">
    <property type="term" value="P:double-strand break repair"/>
    <property type="evidence" value="ECO:0007669"/>
    <property type="project" value="TreeGrafter"/>
</dbReference>
<dbReference type="GO" id="GO:0009432">
    <property type="term" value="P:SOS response"/>
    <property type="evidence" value="ECO:0007669"/>
    <property type="project" value="UniProtKB-UniRule"/>
</dbReference>
<dbReference type="Gene3D" id="3.40.50.300">
    <property type="entry name" value="P-loop containing nucleotide triphosphate hydrolases"/>
    <property type="match status" value="1"/>
</dbReference>
<dbReference type="Gene3D" id="1.20.1050.90">
    <property type="entry name" value="RecF/RecN/SMC, N-terminal domain"/>
    <property type="match status" value="1"/>
</dbReference>
<dbReference type="HAMAP" id="MF_00365">
    <property type="entry name" value="RecF"/>
    <property type="match status" value="1"/>
</dbReference>
<dbReference type="InterPro" id="IPR001238">
    <property type="entry name" value="DNA-binding_RecF"/>
</dbReference>
<dbReference type="InterPro" id="IPR018078">
    <property type="entry name" value="DNA-binding_RecF_CS"/>
</dbReference>
<dbReference type="InterPro" id="IPR027417">
    <property type="entry name" value="P-loop_NTPase"/>
</dbReference>
<dbReference type="InterPro" id="IPR003395">
    <property type="entry name" value="RecF/RecN/SMC_N"/>
</dbReference>
<dbReference type="InterPro" id="IPR042174">
    <property type="entry name" value="RecF_2"/>
</dbReference>
<dbReference type="NCBIfam" id="TIGR00611">
    <property type="entry name" value="recf"/>
    <property type="match status" value="1"/>
</dbReference>
<dbReference type="PANTHER" id="PTHR32182">
    <property type="entry name" value="DNA REPLICATION AND REPAIR PROTEIN RECF"/>
    <property type="match status" value="1"/>
</dbReference>
<dbReference type="PANTHER" id="PTHR32182:SF0">
    <property type="entry name" value="DNA REPLICATION AND REPAIR PROTEIN RECF"/>
    <property type="match status" value="1"/>
</dbReference>
<dbReference type="Pfam" id="PF02463">
    <property type="entry name" value="SMC_N"/>
    <property type="match status" value="1"/>
</dbReference>
<dbReference type="SUPFAM" id="SSF52540">
    <property type="entry name" value="P-loop containing nucleoside triphosphate hydrolases"/>
    <property type="match status" value="1"/>
</dbReference>
<dbReference type="PROSITE" id="PS00617">
    <property type="entry name" value="RECF_1"/>
    <property type="match status" value="1"/>
</dbReference>
<dbReference type="PROSITE" id="PS00618">
    <property type="entry name" value="RECF_2"/>
    <property type="match status" value="1"/>
</dbReference>
<organism>
    <name type="scientific">Coxiella burnetii (strain CbuK_Q154)</name>
    <name type="common">Coxiella burnetii (strain Q154)</name>
    <dbReference type="NCBI Taxonomy" id="434924"/>
    <lineage>
        <taxon>Bacteria</taxon>
        <taxon>Pseudomonadati</taxon>
        <taxon>Pseudomonadota</taxon>
        <taxon>Gammaproteobacteria</taxon>
        <taxon>Legionellales</taxon>
        <taxon>Coxiellaceae</taxon>
        <taxon>Coxiella</taxon>
    </lineage>
</organism>
<name>RECF_COXB1</name>
<evidence type="ECO:0000255" key="1">
    <source>
        <dbReference type="HAMAP-Rule" id="MF_00365"/>
    </source>
</evidence>
<sequence>MPYIGSLKVNQFRNLADVDITPHSQFNFFFGQNGAGKTSILESIYYLSVGRSFRTHLPQRLIQDNTDRFLIFITLYNGTQFIPLGVERDCQGDRCLRINGETASSWSLAAKRLPLCSLSAMSHRFLLDGPRVRRQFLDWLMFHVEPSFFSIWQRLQRSLKQRNASLKAKLPLGEITHWDKMLVEDGERLHQLRQNIVTEFKPLFTQMLQQFLPAYPLIGHYFRGWSEKYSLMEQLQINLKQDLQRGYTQAGPQRADFRLTLRDLPAQDILSQGQQKLVTYALHFAQGLLLKEKTGISPIYLIDDLPAELDANKRDCVIDLVNCLESQVFISGIDPNEIRLPPHSTLFHVKHGKVAAL</sequence>
<proteinExistence type="inferred from homology"/>
<gene>
    <name evidence="1" type="primary">recF</name>
    <name type="ordered locus">CbuK_0003</name>
</gene>
<keyword id="KW-0067">ATP-binding</keyword>
<keyword id="KW-0963">Cytoplasm</keyword>
<keyword id="KW-0227">DNA damage</keyword>
<keyword id="KW-0234">DNA repair</keyword>
<keyword id="KW-0235">DNA replication</keyword>
<keyword id="KW-0238">DNA-binding</keyword>
<keyword id="KW-0547">Nucleotide-binding</keyword>
<keyword id="KW-0742">SOS response</keyword>
<comment type="function">
    <text evidence="1">The RecF protein is involved in DNA metabolism; it is required for DNA replication and normal SOS inducibility. RecF binds preferentially to single-stranded, linear DNA. It also seems to bind ATP.</text>
</comment>
<comment type="subcellular location">
    <subcellularLocation>
        <location evidence="1">Cytoplasm</location>
    </subcellularLocation>
</comment>
<comment type="similarity">
    <text evidence="1">Belongs to the RecF family.</text>
</comment>
<accession>B6J8S5</accession>
<reference key="1">
    <citation type="journal article" date="2009" name="Infect. Immun.">
        <title>Comparative genomics reveal extensive transposon-mediated genomic plasticity and diversity among potential effector proteins within the genus Coxiella.</title>
        <authorList>
            <person name="Beare P.A."/>
            <person name="Unsworth N."/>
            <person name="Andoh M."/>
            <person name="Voth D.E."/>
            <person name="Omsland A."/>
            <person name="Gilk S.D."/>
            <person name="Williams K.P."/>
            <person name="Sobral B.W."/>
            <person name="Kupko J.J. III"/>
            <person name="Porcella S.F."/>
            <person name="Samuel J.E."/>
            <person name="Heinzen R.A."/>
        </authorList>
    </citation>
    <scope>NUCLEOTIDE SEQUENCE [LARGE SCALE GENOMIC DNA]</scope>
    <source>
        <strain>CbuK_Q154</strain>
    </source>
</reference>